<proteinExistence type="inferred from homology"/>
<feature type="chain" id="PRO_0000243163" description="Large ribosomal subunit protein uL22">
    <location>
        <begin position="1"/>
        <end position="112"/>
    </location>
</feature>
<keyword id="KW-1185">Reference proteome</keyword>
<keyword id="KW-0687">Ribonucleoprotein</keyword>
<keyword id="KW-0689">Ribosomal protein</keyword>
<keyword id="KW-0694">RNA-binding</keyword>
<keyword id="KW-0699">rRNA-binding</keyword>
<dbReference type="EMBL" id="AE017354">
    <property type="protein sequence ID" value="AAU26431.1"/>
    <property type="molecule type" value="Genomic_DNA"/>
</dbReference>
<dbReference type="RefSeq" id="YP_094378.2">
    <property type="nucleotide sequence ID" value="NC_002942.5"/>
</dbReference>
<dbReference type="SMR" id="Q5ZYN8"/>
<dbReference type="STRING" id="272624.lpg0334"/>
<dbReference type="PaxDb" id="272624-lpg0334"/>
<dbReference type="KEGG" id="lpn:lpg0334"/>
<dbReference type="eggNOG" id="COG0091">
    <property type="taxonomic scope" value="Bacteria"/>
</dbReference>
<dbReference type="HOGENOM" id="CLU_083987_3_3_6"/>
<dbReference type="OrthoDB" id="9805969at2"/>
<dbReference type="Proteomes" id="UP000000609">
    <property type="component" value="Chromosome"/>
</dbReference>
<dbReference type="GO" id="GO:0022625">
    <property type="term" value="C:cytosolic large ribosomal subunit"/>
    <property type="evidence" value="ECO:0007669"/>
    <property type="project" value="TreeGrafter"/>
</dbReference>
<dbReference type="GO" id="GO:0019843">
    <property type="term" value="F:rRNA binding"/>
    <property type="evidence" value="ECO:0007669"/>
    <property type="project" value="UniProtKB-UniRule"/>
</dbReference>
<dbReference type="GO" id="GO:0003735">
    <property type="term" value="F:structural constituent of ribosome"/>
    <property type="evidence" value="ECO:0007669"/>
    <property type="project" value="InterPro"/>
</dbReference>
<dbReference type="GO" id="GO:0006412">
    <property type="term" value="P:translation"/>
    <property type="evidence" value="ECO:0007669"/>
    <property type="project" value="UniProtKB-UniRule"/>
</dbReference>
<dbReference type="CDD" id="cd00336">
    <property type="entry name" value="Ribosomal_L22"/>
    <property type="match status" value="1"/>
</dbReference>
<dbReference type="Gene3D" id="3.90.470.10">
    <property type="entry name" value="Ribosomal protein L22/L17"/>
    <property type="match status" value="1"/>
</dbReference>
<dbReference type="HAMAP" id="MF_01331_B">
    <property type="entry name" value="Ribosomal_uL22_B"/>
    <property type="match status" value="1"/>
</dbReference>
<dbReference type="InterPro" id="IPR001063">
    <property type="entry name" value="Ribosomal_uL22"/>
</dbReference>
<dbReference type="InterPro" id="IPR005727">
    <property type="entry name" value="Ribosomal_uL22_bac/chlpt-type"/>
</dbReference>
<dbReference type="InterPro" id="IPR047867">
    <property type="entry name" value="Ribosomal_uL22_bac/org-type"/>
</dbReference>
<dbReference type="InterPro" id="IPR018260">
    <property type="entry name" value="Ribosomal_uL22_CS"/>
</dbReference>
<dbReference type="InterPro" id="IPR036394">
    <property type="entry name" value="Ribosomal_uL22_sf"/>
</dbReference>
<dbReference type="NCBIfam" id="TIGR01044">
    <property type="entry name" value="rplV_bact"/>
    <property type="match status" value="1"/>
</dbReference>
<dbReference type="PANTHER" id="PTHR13501">
    <property type="entry name" value="CHLOROPLAST 50S RIBOSOMAL PROTEIN L22-RELATED"/>
    <property type="match status" value="1"/>
</dbReference>
<dbReference type="PANTHER" id="PTHR13501:SF8">
    <property type="entry name" value="LARGE RIBOSOMAL SUBUNIT PROTEIN UL22M"/>
    <property type="match status" value="1"/>
</dbReference>
<dbReference type="Pfam" id="PF00237">
    <property type="entry name" value="Ribosomal_L22"/>
    <property type="match status" value="1"/>
</dbReference>
<dbReference type="SUPFAM" id="SSF54843">
    <property type="entry name" value="Ribosomal protein L22"/>
    <property type="match status" value="1"/>
</dbReference>
<dbReference type="PROSITE" id="PS00464">
    <property type="entry name" value="RIBOSOMAL_L22"/>
    <property type="match status" value="1"/>
</dbReference>
<gene>
    <name evidence="1" type="primary">rplV</name>
    <name type="ordered locus">lpg0334</name>
</gene>
<comment type="function">
    <text evidence="1">This protein binds specifically to 23S rRNA; its binding is stimulated by other ribosomal proteins, e.g. L4, L17, and L20. It is important during the early stages of 50S assembly. It makes multiple contacts with different domains of the 23S rRNA in the assembled 50S subunit and ribosome (By similarity).</text>
</comment>
<comment type="function">
    <text evidence="1">The globular domain of the protein is located near the polypeptide exit tunnel on the outside of the subunit, while an extended beta-hairpin is found that lines the wall of the exit tunnel in the center of the 70S ribosome.</text>
</comment>
<comment type="subunit">
    <text evidence="1">Part of the 50S ribosomal subunit.</text>
</comment>
<comment type="similarity">
    <text evidence="1">Belongs to the universal ribosomal protein uL22 family.</text>
</comment>
<accession>Q5ZYN8</accession>
<sequence length="112" mass="12152">MMEVTAKLKGAPLSAQKGRLVADMIRNMNVSGALDVLKFTPKKGAKLMLKLLESAIANAENNNGADIDDLKVGMVCVDEATTLKRISPRAKGRANRICKRTCHITIKVSDEE</sequence>
<name>RL22_LEGPH</name>
<reference key="1">
    <citation type="journal article" date="2004" name="Science">
        <title>The genomic sequence of the accidental pathogen Legionella pneumophila.</title>
        <authorList>
            <person name="Chien M."/>
            <person name="Morozova I."/>
            <person name="Shi S."/>
            <person name="Sheng H."/>
            <person name="Chen J."/>
            <person name="Gomez S.M."/>
            <person name="Asamani G."/>
            <person name="Hill K."/>
            <person name="Nuara J."/>
            <person name="Feder M."/>
            <person name="Rineer J."/>
            <person name="Greenberg J.J."/>
            <person name="Steshenko V."/>
            <person name="Park S.H."/>
            <person name="Zhao B."/>
            <person name="Teplitskaya E."/>
            <person name="Edwards J.R."/>
            <person name="Pampou S."/>
            <person name="Georghiou A."/>
            <person name="Chou I.-C."/>
            <person name="Iannuccilli W."/>
            <person name="Ulz M.E."/>
            <person name="Kim D.H."/>
            <person name="Geringer-Sameth A."/>
            <person name="Goldsberry C."/>
            <person name="Morozov P."/>
            <person name="Fischer S.G."/>
            <person name="Segal G."/>
            <person name="Qu X."/>
            <person name="Rzhetsky A."/>
            <person name="Zhang P."/>
            <person name="Cayanis E."/>
            <person name="De Jong P.J."/>
            <person name="Ju J."/>
            <person name="Kalachikov S."/>
            <person name="Shuman H.A."/>
            <person name="Russo J.J."/>
        </authorList>
    </citation>
    <scope>NUCLEOTIDE SEQUENCE [LARGE SCALE GENOMIC DNA]</scope>
    <source>
        <strain>Philadelphia 1 / ATCC 33152 / DSM 7513</strain>
    </source>
</reference>
<protein>
    <recommendedName>
        <fullName evidence="1">Large ribosomal subunit protein uL22</fullName>
    </recommendedName>
    <alternativeName>
        <fullName evidence="2">50S ribosomal protein L22</fullName>
    </alternativeName>
</protein>
<evidence type="ECO:0000255" key="1">
    <source>
        <dbReference type="HAMAP-Rule" id="MF_01331"/>
    </source>
</evidence>
<evidence type="ECO:0000305" key="2"/>
<organism>
    <name type="scientific">Legionella pneumophila subsp. pneumophila (strain Philadelphia 1 / ATCC 33152 / DSM 7513)</name>
    <dbReference type="NCBI Taxonomy" id="272624"/>
    <lineage>
        <taxon>Bacteria</taxon>
        <taxon>Pseudomonadati</taxon>
        <taxon>Pseudomonadota</taxon>
        <taxon>Gammaproteobacteria</taxon>
        <taxon>Legionellales</taxon>
        <taxon>Legionellaceae</taxon>
        <taxon>Legionella</taxon>
    </lineage>
</organism>